<organism>
    <name type="scientific">Mycoplasmoides gallisepticum (strain R(low / passage 15 / clone 2))</name>
    <name type="common">Mycoplasma gallisepticum</name>
    <dbReference type="NCBI Taxonomy" id="710127"/>
    <lineage>
        <taxon>Bacteria</taxon>
        <taxon>Bacillati</taxon>
        <taxon>Mycoplasmatota</taxon>
        <taxon>Mycoplasmoidales</taxon>
        <taxon>Mycoplasmoidaceae</taxon>
        <taxon>Mycoplasmoides</taxon>
    </lineage>
</organism>
<feature type="chain" id="PRO_0000191140" description="Chaperone protein ClpB">
    <location>
        <begin position="1"/>
        <end position="717"/>
    </location>
</feature>
<feature type="region of interest" description="NBD1" evidence="1">
    <location>
        <begin position="12"/>
        <end position="195"/>
    </location>
</feature>
<feature type="region of interest" description="Linker" evidence="1">
    <location>
        <begin position="196"/>
        <end position="405"/>
    </location>
</feature>
<feature type="region of interest" description="NBD2" evidence="1">
    <location>
        <begin position="415"/>
        <end position="617"/>
    </location>
</feature>
<feature type="region of interest" description="C-terminal" evidence="1">
    <location>
        <begin position="618"/>
        <end position="717"/>
    </location>
</feature>
<feature type="coiled-coil region" evidence="1">
    <location>
        <begin position="246"/>
        <end position="384"/>
    </location>
</feature>
<feature type="binding site" evidence="1">
    <location>
        <begin position="59"/>
        <end position="66"/>
    </location>
    <ligand>
        <name>ATP</name>
        <dbReference type="ChEBI" id="CHEBI:30616"/>
        <label>1</label>
    </ligand>
</feature>
<feature type="binding site" evidence="1">
    <location>
        <begin position="465"/>
        <end position="472"/>
    </location>
    <ligand>
        <name>ATP</name>
        <dbReference type="ChEBI" id="CHEBI:30616"/>
        <label>2</label>
    </ligand>
</feature>
<accession>Q7NAZ3</accession>
<evidence type="ECO:0000250" key="1"/>
<evidence type="ECO:0000305" key="2"/>
<keyword id="KW-0067">ATP-binding</keyword>
<keyword id="KW-0143">Chaperone</keyword>
<keyword id="KW-0175">Coiled coil</keyword>
<keyword id="KW-0963">Cytoplasm</keyword>
<keyword id="KW-0547">Nucleotide-binding</keyword>
<keyword id="KW-1185">Reference proteome</keyword>
<keyword id="KW-0677">Repeat</keyword>
<keyword id="KW-0346">Stress response</keyword>
<name>CLPB_MYCGA</name>
<comment type="function">
    <text evidence="1">Part of a stress-induced multi-chaperone system, it is involved in the recovery of the cell from heat-induced damage, in cooperation with DnaK, DnaJ and GrpE. Acts before DnaK, in the processing of protein aggregates. Protein binding stimulates the ATPase activity; ATP hydrolysis unfolds the denatured protein aggregates, which probably helps expose new hydrophobic binding sites on the surface of ClpB-bound aggregates, contributing to the solubilization and refolding of denatured protein aggregates by DnaK (By similarity).</text>
</comment>
<comment type="subunit">
    <text evidence="1">Homohexamer. The oligomerization is ATP-dependent (By similarity).</text>
</comment>
<comment type="subcellular location">
    <subcellularLocation>
        <location evidence="2">Cytoplasm</location>
    </subcellularLocation>
</comment>
<comment type="domain">
    <text evidence="1">The N-terminal domain probably functions as a substrate-discriminating domain, recruiting aggregated proteins to the ClpB hexamer and/or stabilizing bound proteins. The NBD2 domain is responsible for oligomerization, whereas the NBD1 domain stabilizes the hexamer probably in an ATP-dependent manner. The movement of the coiled-coil domain is essential for ClpB ability to rescue proteins from an aggregated state, probably by pulling apart large aggregated proteins, which are bound between the coiled-coils motifs of adjacent ClpB subunits in the functional hexamer (By similarity).</text>
</comment>
<comment type="similarity">
    <text evidence="2">Belongs to the ClpA/ClpB family.</text>
</comment>
<gene>
    <name type="primary">clpB</name>
    <name type="ordered locus">MYCGA4920</name>
    <name type="ORF">MGA_0178</name>
</gene>
<dbReference type="EMBL" id="AE015450">
    <property type="protein sequence ID" value="AAP56842.1"/>
    <property type="molecule type" value="Genomic_DNA"/>
</dbReference>
<dbReference type="RefSeq" id="WP_011113741.1">
    <property type="nucleotide sequence ID" value="NC_004829.2"/>
</dbReference>
<dbReference type="SMR" id="Q7NAZ3"/>
<dbReference type="KEGG" id="mga:MGA_0178"/>
<dbReference type="PATRIC" id="fig|233150.7.peg.550"/>
<dbReference type="HOGENOM" id="CLU_005070_4_0_14"/>
<dbReference type="OrthoDB" id="9803641at2"/>
<dbReference type="Proteomes" id="UP000001418">
    <property type="component" value="Chromosome"/>
</dbReference>
<dbReference type="GO" id="GO:0005737">
    <property type="term" value="C:cytoplasm"/>
    <property type="evidence" value="ECO:0007669"/>
    <property type="project" value="UniProtKB-SubCell"/>
</dbReference>
<dbReference type="GO" id="GO:0005524">
    <property type="term" value="F:ATP binding"/>
    <property type="evidence" value="ECO:0007669"/>
    <property type="project" value="UniProtKB-KW"/>
</dbReference>
<dbReference type="GO" id="GO:0016887">
    <property type="term" value="F:ATP hydrolysis activity"/>
    <property type="evidence" value="ECO:0007669"/>
    <property type="project" value="InterPro"/>
</dbReference>
<dbReference type="GO" id="GO:0034605">
    <property type="term" value="P:cellular response to heat"/>
    <property type="evidence" value="ECO:0007669"/>
    <property type="project" value="TreeGrafter"/>
</dbReference>
<dbReference type="CDD" id="cd00009">
    <property type="entry name" value="AAA"/>
    <property type="match status" value="1"/>
</dbReference>
<dbReference type="CDD" id="cd19499">
    <property type="entry name" value="RecA-like_ClpB_Hsp104-like"/>
    <property type="match status" value="1"/>
</dbReference>
<dbReference type="FunFam" id="3.40.50.300:FF:000120">
    <property type="entry name" value="ATP-dependent chaperone ClpB"/>
    <property type="match status" value="1"/>
</dbReference>
<dbReference type="FunFam" id="3.40.50.300:FF:000025">
    <property type="entry name" value="ATP-dependent Clp protease subunit"/>
    <property type="match status" value="1"/>
</dbReference>
<dbReference type="FunFam" id="3.40.50.300:FF:000010">
    <property type="entry name" value="Chaperone clpB 1, putative"/>
    <property type="match status" value="1"/>
</dbReference>
<dbReference type="Gene3D" id="1.10.8.60">
    <property type="match status" value="1"/>
</dbReference>
<dbReference type="Gene3D" id="3.40.50.300">
    <property type="entry name" value="P-loop containing nucleotide triphosphate hydrolases"/>
    <property type="match status" value="3"/>
</dbReference>
<dbReference type="InterPro" id="IPR003593">
    <property type="entry name" value="AAA+_ATPase"/>
</dbReference>
<dbReference type="InterPro" id="IPR003959">
    <property type="entry name" value="ATPase_AAA_core"/>
</dbReference>
<dbReference type="InterPro" id="IPR019489">
    <property type="entry name" value="Clp_ATPase_C"/>
</dbReference>
<dbReference type="InterPro" id="IPR001270">
    <property type="entry name" value="ClpA/B"/>
</dbReference>
<dbReference type="InterPro" id="IPR018368">
    <property type="entry name" value="ClpA/B_CS1"/>
</dbReference>
<dbReference type="InterPro" id="IPR028299">
    <property type="entry name" value="ClpA/B_CS2"/>
</dbReference>
<dbReference type="InterPro" id="IPR041546">
    <property type="entry name" value="ClpA/ClpB_AAA_lid"/>
</dbReference>
<dbReference type="InterPro" id="IPR050130">
    <property type="entry name" value="ClpA_ClpB"/>
</dbReference>
<dbReference type="InterPro" id="IPR027417">
    <property type="entry name" value="P-loop_NTPase"/>
</dbReference>
<dbReference type="PANTHER" id="PTHR11638">
    <property type="entry name" value="ATP-DEPENDENT CLP PROTEASE"/>
    <property type="match status" value="1"/>
</dbReference>
<dbReference type="PANTHER" id="PTHR11638:SF18">
    <property type="entry name" value="HEAT SHOCK PROTEIN 104"/>
    <property type="match status" value="1"/>
</dbReference>
<dbReference type="Pfam" id="PF00004">
    <property type="entry name" value="AAA"/>
    <property type="match status" value="1"/>
</dbReference>
<dbReference type="Pfam" id="PF07724">
    <property type="entry name" value="AAA_2"/>
    <property type="match status" value="1"/>
</dbReference>
<dbReference type="Pfam" id="PF17871">
    <property type="entry name" value="AAA_lid_9"/>
    <property type="match status" value="1"/>
</dbReference>
<dbReference type="Pfam" id="PF10431">
    <property type="entry name" value="ClpB_D2-small"/>
    <property type="match status" value="1"/>
</dbReference>
<dbReference type="PRINTS" id="PR00300">
    <property type="entry name" value="CLPPROTEASEA"/>
</dbReference>
<dbReference type="SMART" id="SM00382">
    <property type="entry name" value="AAA"/>
    <property type="match status" value="2"/>
</dbReference>
<dbReference type="SMART" id="SM01086">
    <property type="entry name" value="ClpB_D2-small"/>
    <property type="match status" value="1"/>
</dbReference>
<dbReference type="SUPFAM" id="SSF52540">
    <property type="entry name" value="P-loop containing nucleoside triphosphate hydrolases"/>
    <property type="match status" value="2"/>
</dbReference>
<dbReference type="PROSITE" id="PS00870">
    <property type="entry name" value="CLPAB_1"/>
    <property type="match status" value="1"/>
</dbReference>
<dbReference type="PROSITE" id="PS00871">
    <property type="entry name" value="CLPAB_2"/>
    <property type="match status" value="1"/>
</dbReference>
<reference key="1">
    <citation type="journal article" date="2003" name="Microbiology">
        <title>The complete genome sequence of the avian pathogen Mycoplasma gallisepticum strain R(low).</title>
        <authorList>
            <person name="Papazisi L."/>
            <person name="Gorton T.S."/>
            <person name="Kutish G."/>
            <person name="Markham P.F."/>
            <person name="Browning G.F."/>
            <person name="Nguyen D.K."/>
            <person name="Swartzell S."/>
            <person name="Madan A."/>
            <person name="Mahairas G."/>
            <person name="Geary S.J."/>
        </authorList>
    </citation>
    <scope>NUCLEOTIDE SEQUENCE [LARGE SCALE GENOMIC DNA]</scope>
    <source>
        <strain>R(low / passage 15 / clone 2)</strain>
    </source>
</reference>
<sequence length="717" mass="81402">MFASFTPTEEKNVLSKYSRNLNDEIARNAIDPTIGREEEIRRLIEILSRKNKNNPVLIGEPGVGKTAIVEGFARKIVNGDVPDNLKDVEVVELSLSSLIAGTQFQGSFEERLNKILKEVKNSSGKVILFIDEIHQLVGMGKNSSNSAMDAANILKPMMARGEIKVIGATTIDEYRKYIEKDGALERRMQKILVDEPTKQEALTIMRGLRERWEAFHKVRIFDDALVAAVEMSARYISDRYLPDKAIDLIDEAAAKIKTLIHSLPPELDNIKQKIIHLSTELAALEREKKENHSNVRLGRIEQLKKEIKDFTNKQNELTVKWTQQKTIYECINKLKEEVTNLTAEIERLQAKGEYTQASKLLYLEIPKRQEEIEKKTKELSEFTDNLIKTSISRVEIAEVISQATKIPLSKLVASEQQKLLNLKNDLSKYIKGQDHAIKNVSDAVLRGRAQINDPNRPIGSFLFLGPTGVGKTEVAKKLAYCLFDNEKAMVRIDMSEFMERHSVDKLIGSPPGYIGYDQPGVLSDAIRTKPYAVVLFDEIEKAHPDVLNILLQILDDGQLTDNHNRLVNFKNTIIIMTSNIGAEHILANNPAKTIEELKRKIRPELLNRIDELITFKALNDKDLSAIAQKLLSDLSDRIKKQQINITFDKKIVENVVKHGSNTVFGARPLKRYIQREVENFLAKKIIENKLEKNKSYVCTFNAETNEYTLVNLRKAVS</sequence>
<proteinExistence type="inferred from homology"/>
<protein>
    <recommendedName>
        <fullName>Chaperone protein ClpB</fullName>
    </recommendedName>
</protein>